<proteinExistence type="evidence at transcript level"/>
<name>TLP5_ARATH</name>
<organism>
    <name type="scientific">Arabidopsis thaliana</name>
    <name type="common">Mouse-ear cress</name>
    <dbReference type="NCBI Taxonomy" id="3702"/>
    <lineage>
        <taxon>Eukaryota</taxon>
        <taxon>Viridiplantae</taxon>
        <taxon>Streptophyta</taxon>
        <taxon>Embryophyta</taxon>
        <taxon>Tracheophyta</taxon>
        <taxon>Spermatophyta</taxon>
        <taxon>Magnoliopsida</taxon>
        <taxon>eudicotyledons</taxon>
        <taxon>Gunneridae</taxon>
        <taxon>Pentapetalae</taxon>
        <taxon>rosids</taxon>
        <taxon>malvids</taxon>
        <taxon>Brassicales</taxon>
        <taxon>Brassicaceae</taxon>
        <taxon>Camelineae</taxon>
        <taxon>Arabidopsis</taxon>
    </lineage>
</organism>
<evidence type="ECO:0000255" key="1">
    <source>
        <dbReference type="PROSITE-ProRule" id="PRU00080"/>
    </source>
</evidence>
<evidence type="ECO:0000256" key="2">
    <source>
        <dbReference type="SAM" id="MobiDB-lite"/>
    </source>
</evidence>
<evidence type="ECO:0000269" key="3">
    <source>
    </source>
</evidence>
<evidence type="ECO:0000303" key="4">
    <source>
    </source>
</evidence>
<evidence type="ECO:0000305" key="5"/>
<evidence type="ECO:0000312" key="6">
    <source>
        <dbReference type="Araport" id="AT1G43640"/>
    </source>
</evidence>
<evidence type="ECO:0000312" key="7">
    <source>
        <dbReference type="EMBL" id="AAD39275.1"/>
    </source>
</evidence>
<accession>Q944S3</accession>
<accession>Q9XIF9</accession>
<dbReference type="EMBL" id="AY046921">
    <property type="protein sequence ID" value="AAL03977.1"/>
    <property type="molecule type" value="mRNA"/>
</dbReference>
<dbReference type="EMBL" id="AC007203">
    <property type="protein sequence ID" value="AAD39275.1"/>
    <property type="status" value="ALT_SEQ"/>
    <property type="molecule type" value="Genomic_DNA"/>
</dbReference>
<dbReference type="EMBL" id="CP002684">
    <property type="protein sequence ID" value="AEE31979.1"/>
    <property type="molecule type" value="Genomic_DNA"/>
</dbReference>
<dbReference type="EMBL" id="AF424565">
    <property type="protein sequence ID" value="AAL11559.1"/>
    <property type="molecule type" value="mRNA"/>
</dbReference>
<dbReference type="EMBL" id="AY072154">
    <property type="protein sequence ID" value="AAL59976.1"/>
    <property type="molecule type" value="mRNA"/>
</dbReference>
<dbReference type="EMBL" id="AY122972">
    <property type="protein sequence ID" value="AAM67505.1"/>
    <property type="molecule type" value="mRNA"/>
</dbReference>
<dbReference type="PIR" id="F96499">
    <property type="entry name" value="F96499"/>
</dbReference>
<dbReference type="RefSeq" id="NP_564485.1">
    <property type="nucleotide sequence ID" value="NM_103489.3"/>
</dbReference>
<dbReference type="SMR" id="Q944S3"/>
<dbReference type="BioGRID" id="26173">
    <property type="interactions" value="1"/>
</dbReference>
<dbReference type="FunCoup" id="Q944S3">
    <property type="interactions" value="319"/>
</dbReference>
<dbReference type="STRING" id="3702.Q944S3"/>
<dbReference type="iPTMnet" id="Q944S3"/>
<dbReference type="PaxDb" id="3702-AT1G43640.1"/>
<dbReference type="ProteomicsDB" id="234333"/>
<dbReference type="EnsemblPlants" id="AT1G43640.1">
    <property type="protein sequence ID" value="AT1G43640.1"/>
    <property type="gene ID" value="AT1G43640"/>
</dbReference>
<dbReference type="GeneID" id="840948"/>
<dbReference type="Gramene" id="AT1G43640.1">
    <property type="protein sequence ID" value="AT1G43640.1"/>
    <property type="gene ID" value="AT1G43640"/>
</dbReference>
<dbReference type="KEGG" id="ath:AT1G43640"/>
<dbReference type="Araport" id="AT1G43640"/>
<dbReference type="TAIR" id="AT1G43640">
    <property type="gene designation" value="TLP5"/>
</dbReference>
<dbReference type="eggNOG" id="KOG2502">
    <property type="taxonomic scope" value="Eukaryota"/>
</dbReference>
<dbReference type="HOGENOM" id="CLU_028236_3_0_1"/>
<dbReference type="InParanoid" id="Q944S3"/>
<dbReference type="PhylomeDB" id="Q944S3"/>
<dbReference type="PRO" id="PR:Q944S3"/>
<dbReference type="Proteomes" id="UP000006548">
    <property type="component" value="Chromosome 1"/>
</dbReference>
<dbReference type="ExpressionAtlas" id="Q944S3">
    <property type="expression patterns" value="baseline and differential"/>
</dbReference>
<dbReference type="GO" id="GO:0006355">
    <property type="term" value="P:regulation of DNA-templated transcription"/>
    <property type="evidence" value="ECO:0000304"/>
    <property type="project" value="TAIR"/>
</dbReference>
<dbReference type="GO" id="GO:0009620">
    <property type="term" value="P:response to fungus"/>
    <property type="evidence" value="ECO:0000315"/>
    <property type="project" value="TAIR"/>
</dbReference>
<dbReference type="CDD" id="cd22153">
    <property type="entry name" value="F-box_AtTLP-like"/>
    <property type="match status" value="1"/>
</dbReference>
<dbReference type="FunFam" id="3.20.90.10:FF:000003">
    <property type="entry name" value="Tubby-like F-box protein"/>
    <property type="match status" value="1"/>
</dbReference>
<dbReference type="Gene3D" id="3.20.90.10">
    <property type="entry name" value="Tubby Protein, Chain A"/>
    <property type="match status" value="1"/>
</dbReference>
<dbReference type="InterPro" id="IPR025659">
    <property type="entry name" value="Tubby-like_C"/>
</dbReference>
<dbReference type="InterPro" id="IPR000007">
    <property type="entry name" value="Tubby_C"/>
</dbReference>
<dbReference type="InterPro" id="IPR018066">
    <property type="entry name" value="Tubby_C_CS"/>
</dbReference>
<dbReference type="PANTHER" id="PTHR16517:SF159">
    <property type="entry name" value="TUBBY-LIKE F-BOX PROTEIN 5"/>
    <property type="match status" value="1"/>
</dbReference>
<dbReference type="PANTHER" id="PTHR16517">
    <property type="entry name" value="TUBBY-RELATED"/>
    <property type="match status" value="1"/>
</dbReference>
<dbReference type="Pfam" id="PF01167">
    <property type="entry name" value="Tub"/>
    <property type="match status" value="1"/>
</dbReference>
<dbReference type="PRINTS" id="PR01573">
    <property type="entry name" value="SUPERTUBBY"/>
</dbReference>
<dbReference type="SUPFAM" id="SSF54518">
    <property type="entry name" value="Tubby C-terminal domain-like"/>
    <property type="match status" value="1"/>
</dbReference>
<dbReference type="PROSITE" id="PS01200">
    <property type="entry name" value="TUB_1"/>
    <property type="match status" value="1"/>
</dbReference>
<gene>
    <name evidence="5" type="primary">TULP5</name>
    <name evidence="4" type="synonym">TLP5</name>
    <name evidence="6" type="ordered locus">At1g43640</name>
    <name evidence="7" type="ORF">T10P12.9</name>
</gene>
<reference key="1">
    <citation type="journal article" date="2004" name="Plant Physiol.">
        <title>Molecular analyses of the Arabidopsis TUBBY-like protein gene family.</title>
        <authorList>
            <person name="Lai C.-P."/>
            <person name="Lee C.-L."/>
            <person name="Chen P.-H."/>
            <person name="Wu S.-H."/>
            <person name="Yang C.-C."/>
            <person name="Shaw J.-F."/>
        </authorList>
    </citation>
    <scope>NUCLEOTIDE SEQUENCE [MRNA]</scope>
    <scope>TISSUE SPECIFICITY</scope>
    <scope>GENE FAMILY</scope>
    <scope>NOMENCLATURE</scope>
</reference>
<reference key="2">
    <citation type="journal article" date="2000" name="Nature">
        <title>Sequence and analysis of chromosome 1 of the plant Arabidopsis thaliana.</title>
        <authorList>
            <person name="Theologis A."/>
            <person name="Ecker J.R."/>
            <person name="Palm C.J."/>
            <person name="Federspiel N.A."/>
            <person name="Kaul S."/>
            <person name="White O."/>
            <person name="Alonso J."/>
            <person name="Altafi H."/>
            <person name="Araujo R."/>
            <person name="Bowman C.L."/>
            <person name="Brooks S.Y."/>
            <person name="Buehler E."/>
            <person name="Chan A."/>
            <person name="Chao Q."/>
            <person name="Chen H."/>
            <person name="Cheuk R.F."/>
            <person name="Chin C.W."/>
            <person name="Chung M.K."/>
            <person name="Conn L."/>
            <person name="Conway A.B."/>
            <person name="Conway A.R."/>
            <person name="Creasy T.H."/>
            <person name="Dewar K."/>
            <person name="Dunn P."/>
            <person name="Etgu P."/>
            <person name="Feldblyum T.V."/>
            <person name="Feng J.-D."/>
            <person name="Fong B."/>
            <person name="Fujii C.Y."/>
            <person name="Gill J.E."/>
            <person name="Goldsmith A.D."/>
            <person name="Haas B."/>
            <person name="Hansen N.F."/>
            <person name="Hughes B."/>
            <person name="Huizar L."/>
            <person name="Hunter J.L."/>
            <person name="Jenkins J."/>
            <person name="Johnson-Hopson C."/>
            <person name="Khan S."/>
            <person name="Khaykin E."/>
            <person name="Kim C.J."/>
            <person name="Koo H.L."/>
            <person name="Kremenetskaia I."/>
            <person name="Kurtz D.B."/>
            <person name="Kwan A."/>
            <person name="Lam B."/>
            <person name="Langin-Hooper S."/>
            <person name="Lee A."/>
            <person name="Lee J.M."/>
            <person name="Lenz C.A."/>
            <person name="Li J.H."/>
            <person name="Li Y.-P."/>
            <person name="Lin X."/>
            <person name="Liu S.X."/>
            <person name="Liu Z.A."/>
            <person name="Luros J.S."/>
            <person name="Maiti R."/>
            <person name="Marziali A."/>
            <person name="Militscher J."/>
            <person name="Miranda M."/>
            <person name="Nguyen M."/>
            <person name="Nierman W.C."/>
            <person name="Osborne B.I."/>
            <person name="Pai G."/>
            <person name="Peterson J."/>
            <person name="Pham P.K."/>
            <person name="Rizzo M."/>
            <person name="Rooney T."/>
            <person name="Rowley D."/>
            <person name="Sakano H."/>
            <person name="Salzberg S.L."/>
            <person name="Schwartz J.R."/>
            <person name="Shinn P."/>
            <person name="Southwick A.M."/>
            <person name="Sun H."/>
            <person name="Tallon L.J."/>
            <person name="Tambunga G."/>
            <person name="Toriumi M.J."/>
            <person name="Town C.D."/>
            <person name="Utterback T."/>
            <person name="Van Aken S."/>
            <person name="Vaysberg M."/>
            <person name="Vysotskaia V.S."/>
            <person name="Walker M."/>
            <person name="Wu D."/>
            <person name="Yu G."/>
            <person name="Fraser C.M."/>
            <person name="Venter J.C."/>
            <person name="Davis R.W."/>
        </authorList>
    </citation>
    <scope>NUCLEOTIDE SEQUENCE [LARGE SCALE GENOMIC DNA]</scope>
    <source>
        <strain>cv. Columbia</strain>
    </source>
</reference>
<reference key="3">
    <citation type="journal article" date="2017" name="Plant J.">
        <title>Araport11: a complete reannotation of the Arabidopsis thaliana reference genome.</title>
        <authorList>
            <person name="Cheng C.Y."/>
            <person name="Krishnakumar V."/>
            <person name="Chan A.P."/>
            <person name="Thibaud-Nissen F."/>
            <person name="Schobel S."/>
            <person name="Town C.D."/>
        </authorList>
    </citation>
    <scope>GENOME REANNOTATION</scope>
    <source>
        <strain>cv. Columbia</strain>
    </source>
</reference>
<reference key="4">
    <citation type="journal article" date="2003" name="Science">
        <title>Empirical analysis of transcriptional activity in the Arabidopsis genome.</title>
        <authorList>
            <person name="Yamada K."/>
            <person name="Lim J."/>
            <person name="Dale J.M."/>
            <person name="Chen H."/>
            <person name="Shinn P."/>
            <person name="Palm C.J."/>
            <person name="Southwick A.M."/>
            <person name="Wu H.C."/>
            <person name="Kim C.J."/>
            <person name="Nguyen M."/>
            <person name="Pham P.K."/>
            <person name="Cheuk R.F."/>
            <person name="Karlin-Newmann G."/>
            <person name="Liu S.X."/>
            <person name="Lam B."/>
            <person name="Sakano H."/>
            <person name="Wu T."/>
            <person name="Yu G."/>
            <person name="Miranda M."/>
            <person name="Quach H.L."/>
            <person name="Tripp M."/>
            <person name="Chang C.H."/>
            <person name="Lee J.M."/>
            <person name="Toriumi M.J."/>
            <person name="Chan M.M."/>
            <person name="Tang C.C."/>
            <person name="Onodera C.S."/>
            <person name="Deng J.M."/>
            <person name="Akiyama K."/>
            <person name="Ansari Y."/>
            <person name="Arakawa T."/>
            <person name="Banh J."/>
            <person name="Banno F."/>
            <person name="Bowser L."/>
            <person name="Brooks S.Y."/>
            <person name="Carninci P."/>
            <person name="Chao Q."/>
            <person name="Choy N."/>
            <person name="Enju A."/>
            <person name="Goldsmith A.D."/>
            <person name="Gurjal M."/>
            <person name="Hansen N.F."/>
            <person name="Hayashizaki Y."/>
            <person name="Johnson-Hopson C."/>
            <person name="Hsuan V.W."/>
            <person name="Iida K."/>
            <person name="Karnes M."/>
            <person name="Khan S."/>
            <person name="Koesema E."/>
            <person name="Ishida J."/>
            <person name="Jiang P.X."/>
            <person name="Jones T."/>
            <person name="Kawai J."/>
            <person name="Kamiya A."/>
            <person name="Meyers C."/>
            <person name="Nakajima M."/>
            <person name="Narusaka M."/>
            <person name="Seki M."/>
            <person name="Sakurai T."/>
            <person name="Satou M."/>
            <person name="Tamse R."/>
            <person name="Vaysberg M."/>
            <person name="Wallender E.K."/>
            <person name="Wong C."/>
            <person name="Yamamura Y."/>
            <person name="Yuan S."/>
            <person name="Shinozaki K."/>
            <person name="Davis R.W."/>
            <person name="Theologis A."/>
            <person name="Ecker J.R."/>
        </authorList>
    </citation>
    <scope>NUCLEOTIDE SEQUENCE [LARGE SCALE MRNA]</scope>
    <source>
        <strain>cv. Columbia</strain>
    </source>
</reference>
<protein>
    <recommendedName>
        <fullName evidence="4">Tubby-like F-box protein 5</fullName>
        <shortName evidence="4">AtTLP5</shortName>
    </recommendedName>
</protein>
<keyword id="KW-1185">Reference proteome</keyword>
<feature type="chain" id="PRO_0000272233" description="Tubby-like F-box protein 5">
    <location>
        <begin position="1"/>
        <end position="429"/>
    </location>
</feature>
<feature type="domain" description="F-box" evidence="1">
    <location>
        <begin position="53"/>
        <end position="108"/>
    </location>
</feature>
<feature type="region of interest" description="Disordered" evidence="2">
    <location>
        <begin position="360"/>
        <end position="385"/>
    </location>
</feature>
<feature type="compositionally biased region" description="Polar residues" evidence="2">
    <location>
        <begin position="374"/>
        <end position="383"/>
    </location>
</feature>
<sequence length="429" mass="47845">MSFLSIVRDVRDTVGSFSRRSFDVRVSNGTTHQRSKSHGVEAHIEDLIVIKNTRWANLPAALLRDVMKKLDESESTWPARKQVVACAGVCKTWRLMCKDIVKSPEFSGKLTFPVSLKQPGPRDGIIQCYIKRDKSNMTYHLYLSLSPAILVESGKFLLSAKRSRRATYTEYVISMDADNISRSSSTYIGKLKSNFLGTKFIVYDTAPAYNSSQILSPPNRSRSFNSKKVSPKVPSGSYNIAQVTYELNLLGTRGPRRMNCIMHSIPSLALEPGGTVPSQPEFLQRSLDESFRSIGSSKIVNHSGDFTRPKEEEGKVRPLVLKTKPPRWLQPLRCWCLNFKGRVTVASVKNFQLMSAATVQPGSGSDGGALATRPSLSPQQPEQSNHDKIILHFGKVGKDMFTMDYRYPLSAFQAFAISLSTFDTKLACE</sequence>
<comment type="tissue specificity">
    <text evidence="3">Mostly expressed in roots, flowers and siliques.</text>
</comment>
<comment type="similarity">
    <text evidence="5">Belongs to the TUB family.</text>
</comment>
<comment type="sequence caution" evidence="5">
    <conflict type="erroneous gene model prediction">
        <sequence resource="EMBL-CDS" id="AAD39275"/>
    </conflict>
</comment>